<name>SASA_NOSS1</name>
<sequence length="401" mass="45565">MLKHDSMQVSQDQPIYSEAPLQLLLFVDGRPKSKQQVQRIRAYLKDLQAEYNFELQIIDVGQQPYLAEHFKLVATPALIKIHPEPRQILAGSNIITQLKNLWPRWQAAADTYAKLQEDLQERVDDNGRVAQPQSTINSVAVSAELLRLSDEIFNLKQEKEKLLEQLQFKDRVIAMLVHDLRNPLTAAAIAIETLQSNYNPDIGQFQRLKPALVVNLLRQARTQAKTIDKMIADLLQVGRGTDTELIIIPQKTEIGLLCLEVLGELRDRYTTKAQKVETDIPQDLPCVYADPERIRQVLINLLDNAIKYTPEGGTISIAGLHRTTQKVQFSIGDTGPGIPSDNRERIFENHYRLERDEAKEGYGIGLSLCQRIIRAHYGQIWVDSNPHGGAWFHFTLPVYPS</sequence>
<reference key="1">
    <citation type="journal article" date="2001" name="DNA Res.">
        <title>Complete genomic sequence of the filamentous nitrogen-fixing cyanobacterium Anabaena sp. strain PCC 7120.</title>
        <authorList>
            <person name="Kaneko T."/>
            <person name="Nakamura Y."/>
            <person name="Wolk C.P."/>
            <person name="Kuritz T."/>
            <person name="Sasamoto S."/>
            <person name="Watanabe A."/>
            <person name="Iriguchi M."/>
            <person name="Ishikawa A."/>
            <person name="Kawashima K."/>
            <person name="Kimura T."/>
            <person name="Kishida Y."/>
            <person name="Kohara M."/>
            <person name="Matsumoto M."/>
            <person name="Matsuno A."/>
            <person name="Muraki A."/>
            <person name="Nakazaki N."/>
            <person name="Shimpo S."/>
            <person name="Sugimoto M."/>
            <person name="Takazawa M."/>
            <person name="Yamada M."/>
            <person name="Yasuda M."/>
            <person name="Tabata S."/>
        </authorList>
    </citation>
    <scope>NUCLEOTIDE SEQUENCE [LARGE SCALE GENOMIC DNA]</scope>
    <source>
        <strain>PCC 7120 / SAG 25.82 / UTEX 2576</strain>
    </source>
</reference>
<organism>
    <name type="scientific">Nostoc sp. (strain PCC 7120 / SAG 25.82 / UTEX 2576)</name>
    <dbReference type="NCBI Taxonomy" id="103690"/>
    <lineage>
        <taxon>Bacteria</taxon>
        <taxon>Bacillati</taxon>
        <taxon>Cyanobacteriota</taxon>
        <taxon>Cyanophyceae</taxon>
        <taxon>Nostocales</taxon>
        <taxon>Nostocaceae</taxon>
        <taxon>Nostoc</taxon>
    </lineage>
</organism>
<gene>
    <name evidence="1" type="primary">sasA</name>
    <name type="ordered locus">all3600</name>
</gene>
<proteinExistence type="inferred from homology"/>
<accession>Q8YR50</accession>
<evidence type="ECO:0000255" key="1">
    <source>
        <dbReference type="HAMAP-Rule" id="MF_01837"/>
    </source>
</evidence>
<protein>
    <recommendedName>
        <fullName evidence="1">Adaptive-response sensory kinase SasA</fullName>
        <ecNumber evidence="1">2.7.13.3</ecNumber>
    </recommendedName>
    <alternativeName>
        <fullName evidence="1">Sensor histidine kinase SasA</fullName>
    </alternativeName>
</protein>
<comment type="function">
    <text evidence="1">Member of the two-component regulatory system SasA/RpaA involved in genome-wide circadian gene expression. One of several clock output pathways. Participates in the Kai clock protein complex, the main circadian regulator in cyanobacteria, via its interaction with KaiC. KaiC enhances the autophosphorylation activity of SasA, which then transfers its phosphate group to RpaA to activate it. In addition to its output function, recruits fold-shifted KaiB (KaiB(fs)) to KaiC to cooperatively form the KaiB(6):KaiC(6) complex (independent of SasA kinase activity). Required for robustness of the circadian rhythm of gene expression and is involved in clock output, also required for adaptation to light/dark cycles.</text>
</comment>
<comment type="catalytic activity">
    <reaction evidence="1">
        <text>ATP + protein L-histidine = ADP + protein N-phospho-L-histidine.</text>
        <dbReference type="EC" id="2.7.13.3"/>
    </reaction>
</comment>
<comment type="subunit">
    <text evidence="1">Homooligomerizes. Interacts with KaiC. Participates in the KaiABC clock complex, whose core is composed of a KaiC homohexamer, 6 KaiB and up to 6 KaiA dimers. SasA and KaiB(fs) compete to bind to KaiC.</text>
</comment>
<comment type="domain">
    <text evidence="1">The N-terminus interacts with KaiC, while the C-terminal histidine kinase domain autophosphorylates and is probably responsible for self-oligomerization. The N-terminal domain stimulates the C-terminus to autophosphorylate.</text>
</comment>
<keyword id="KW-0067">ATP-binding</keyword>
<keyword id="KW-0090">Biological rhythms</keyword>
<keyword id="KW-0418">Kinase</keyword>
<keyword id="KW-0547">Nucleotide-binding</keyword>
<keyword id="KW-0597">Phosphoprotein</keyword>
<keyword id="KW-1185">Reference proteome</keyword>
<keyword id="KW-0808">Transferase</keyword>
<keyword id="KW-0902">Two-component regulatory system</keyword>
<dbReference type="EC" id="2.7.13.3" evidence="1"/>
<dbReference type="EMBL" id="BA000019">
    <property type="protein sequence ID" value="BAB75299.1"/>
    <property type="molecule type" value="Genomic_DNA"/>
</dbReference>
<dbReference type="PIR" id="AI2255">
    <property type="entry name" value="AI2255"/>
</dbReference>
<dbReference type="SMR" id="Q8YR50"/>
<dbReference type="STRING" id="103690.gene:10495641"/>
<dbReference type="KEGG" id="ana:all3600"/>
<dbReference type="eggNOG" id="COG2205">
    <property type="taxonomic scope" value="Bacteria"/>
</dbReference>
<dbReference type="Proteomes" id="UP000002483">
    <property type="component" value="Chromosome"/>
</dbReference>
<dbReference type="GO" id="GO:0005524">
    <property type="term" value="F:ATP binding"/>
    <property type="evidence" value="ECO:0007669"/>
    <property type="project" value="UniProtKB-KW"/>
</dbReference>
<dbReference type="GO" id="GO:0000155">
    <property type="term" value="F:phosphorelay sensor kinase activity"/>
    <property type="evidence" value="ECO:0007669"/>
    <property type="project" value="InterPro"/>
</dbReference>
<dbReference type="GO" id="GO:0007623">
    <property type="term" value="P:circadian rhythm"/>
    <property type="evidence" value="ECO:0007669"/>
    <property type="project" value="UniProtKB-UniRule"/>
</dbReference>
<dbReference type="CDD" id="cd00075">
    <property type="entry name" value="HATPase"/>
    <property type="match status" value="1"/>
</dbReference>
<dbReference type="CDD" id="cd00082">
    <property type="entry name" value="HisKA"/>
    <property type="match status" value="1"/>
</dbReference>
<dbReference type="CDD" id="cd02978">
    <property type="entry name" value="KaiB_like"/>
    <property type="match status" value="1"/>
</dbReference>
<dbReference type="FunFam" id="3.30.565.10:FF:000006">
    <property type="entry name" value="Sensor histidine kinase WalK"/>
    <property type="match status" value="1"/>
</dbReference>
<dbReference type="Gene3D" id="1.10.287.130">
    <property type="match status" value="1"/>
</dbReference>
<dbReference type="Gene3D" id="3.40.30.10">
    <property type="entry name" value="Glutaredoxin"/>
    <property type="match status" value="1"/>
</dbReference>
<dbReference type="Gene3D" id="3.30.565.10">
    <property type="entry name" value="Histidine kinase-like ATPase, C-terminal domain"/>
    <property type="match status" value="1"/>
</dbReference>
<dbReference type="HAMAP" id="MF_01837">
    <property type="entry name" value="Kinase_SasA"/>
    <property type="match status" value="1"/>
</dbReference>
<dbReference type="InterPro" id="IPR036890">
    <property type="entry name" value="HATPase_C_sf"/>
</dbReference>
<dbReference type="InterPro" id="IPR005467">
    <property type="entry name" value="His_kinase_dom"/>
</dbReference>
<dbReference type="InterPro" id="IPR003661">
    <property type="entry name" value="HisK_dim/P_dom"/>
</dbReference>
<dbReference type="InterPro" id="IPR036097">
    <property type="entry name" value="HisK_dim/P_sf"/>
</dbReference>
<dbReference type="InterPro" id="IPR011649">
    <property type="entry name" value="KaiB_domain"/>
</dbReference>
<dbReference type="InterPro" id="IPR023527">
    <property type="entry name" value="Kinase_SasA"/>
</dbReference>
<dbReference type="InterPro" id="IPR050736">
    <property type="entry name" value="Sensor_HK_Regulatory"/>
</dbReference>
<dbReference type="InterPro" id="IPR004358">
    <property type="entry name" value="Sig_transdc_His_kin-like_C"/>
</dbReference>
<dbReference type="InterPro" id="IPR036249">
    <property type="entry name" value="Thioredoxin-like_sf"/>
</dbReference>
<dbReference type="NCBIfam" id="NF006800">
    <property type="entry name" value="PRK09303.1"/>
    <property type="match status" value="1"/>
</dbReference>
<dbReference type="PANTHER" id="PTHR43711:SF26">
    <property type="entry name" value="SENSOR HISTIDINE KINASE RCSC"/>
    <property type="match status" value="1"/>
</dbReference>
<dbReference type="PANTHER" id="PTHR43711">
    <property type="entry name" value="TWO-COMPONENT HISTIDINE KINASE"/>
    <property type="match status" value="1"/>
</dbReference>
<dbReference type="Pfam" id="PF02518">
    <property type="entry name" value="HATPase_c"/>
    <property type="match status" value="1"/>
</dbReference>
<dbReference type="Pfam" id="PF00512">
    <property type="entry name" value="HisKA"/>
    <property type="match status" value="1"/>
</dbReference>
<dbReference type="Pfam" id="PF07689">
    <property type="entry name" value="KaiB"/>
    <property type="match status" value="1"/>
</dbReference>
<dbReference type="PRINTS" id="PR00344">
    <property type="entry name" value="BCTRLSENSOR"/>
</dbReference>
<dbReference type="SMART" id="SM00387">
    <property type="entry name" value="HATPase_c"/>
    <property type="match status" value="1"/>
</dbReference>
<dbReference type="SMART" id="SM00388">
    <property type="entry name" value="HisKA"/>
    <property type="match status" value="1"/>
</dbReference>
<dbReference type="SMART" id="SM01248">
    <property type="entry name" value="KaiB"/>
    <property type="match status" value="1"/>
</dbReference>
<dbReference type="SUPFAM" id="SSF55874">
    <property type="entry name" value="ATPase domain of HSP90 chaperone/DNA topoisomerase II/histidine kinase"/>
    <property type="match status" value="1"/>
</dbReference>
<dbReference type="SUPFAM" id="SSF47384">
    <property type="entry name" value="Homodimeric domain of signal transducing histidine kinase"/>
    <property type="match status" value="1"/>
</dbReference>
<dbReference type="SUPFAM" id="SSF52833">
    <property type="entry name" value="Thioredoxin-like"/>
    <property type="match status" value="1"/>
</dbReference>
<dbReference type="PROSITE" id="PS50109">
    <property type="entry name" value="HIS_KIN"/>
    <property type="match status" value="1"/>
</dbReference>
<feature type="chain" id="PRO_0000074867" description="Adaptive-response sensory kinase SasA">
    <location>
        <begin position="1"/>
        <end position="401"/>
    </location>
</feature>
<feature type="domain" description="Histidine kinase" evidence="1">
    <location>
        <begin position="175"/>
        <end position="400"/>
    </location>
</feature>
<feature type="modified residue" description="Phosphohistidine; by autocatalysis" evidence="1">
    <location>
        <position position="178"/>
    </location>
</feature>